<reference key="1">
    <citation type="journal article" date="1999" name="J. Virol.">
        <title>Comparison of the complete DNA sequences of human herpesvirus 6 variants A and B.</title>
        <authorList>
            <person name="Isegawa Y."/>
            <person name="Mukai T."/>
            <person name="Nakano K."/>
            <person name="Kagawa M."/>
            <person name="Chen J."/>
            <person name="Mori Y."/>
            <person name="Sunagawa T."/>
            <person name="Kawanishi K."/>
            <person name="Sashihara J."/>
            <person name="Hata A."/>
            <person name="Zou P."/>
            <person name="Kosuge H."/>
            <person name="Yamanishi K."/>
        </authorList>
    </citation>
    <scope>NUCLEOTIDE SEQUENCE [LARGE SCALE GENOMIC DNA]</scope>
    <source>
        <strain>HST</strain>
    </source>
</reference>
<evidence type="ECO:0000255" key="1">
    <source>
        <dbReference type="HAMAP-Rule" id="MF_04023"/>
    </source>
</evidence>
<evidence type="ECO:0000256" key="2">
    <source>
        <dbReference type="SAM" id="MobiDB-lite"/>
    </source>
</evidence>
<protein>
    <recommendedName>
        <fullName evidence="1">Nuclear egress protein 1</fullName>
    </recommendedName>
</protein>
<name>NEC1_HHV6H</name>
<feature type="chain" id="PRO_0000461147" description="Nuclear egress protein 1">
    <location>
        <begin position="1"/>
        <end position="264"/>
    </location>
</feature>
<feature type="zinc finger region" description="CCCH-type" evidence="1">
    <location>
        <begin position="83"/>
        <end position="187"/>
    </location>
</feature>
<feature type="region of interest" description="Disordered" evidence="2">
    <location>
        <begin position="1"/>
        <end position="22"/>
    </location>
</feature>
<feature type="compositionally biased region" description="Basic residues" evidence="2">
    <location>
        <begin position="1"/>
        <end position="12"/>
    </location>
</feature>
<keyword id="KW-1043">Host membrane</keyword>
<keyword id="KW-1048">Host nucleus</keyword>
<keyword id="KW-0472">Membrane</keyword>
<keyword id="KW-0479">Metal-binding</keyword>
<keyword id="KW-0597">Phosphoprotein</keyword>
<keyword id="KW-0862">Zinc</keyword>
<keyword id="KW-0863">Zinc-finger</keyword>
<sequence>MTVHKNRFRRSRSLSVTHRIQKRPDHREKTKLYLQLKLHDLHAVFNLFPEYEQKFLAIIKLPITGKEPIDVPFSLSNHHQHTCLEFSPYANEQISKSACLHCESVSVPTSSDAMVAHLNQVTNVMQNRFYFYGFRKDMELIRMSAKQPTIFQIFYIVHNTINNIFPIMFEKKQKLGMHIVFQSRTLHIPCECIKQIIAVSSGYNVYLDILQDSVILTVLCETLDTNTNIHIDIGMLQKKLEEMDIPNEISDRLEKYKGHLIGFH</sequence>
<proteinExistence type="inferred from homology"/>
<accession>P0DTO8</accession>
<accession>Q77PU8</accession>
<accession>Q9WT27</accession>
<dbReference type="EMBL" id="AB021506">
    <property type="protein sequence ID" value="BAA78258.1"/>
    <property type="molecule type" value="Genomic_DNA"/>
</dbReference>
<dbReference type="RefSeq" id="NP_050218.1">
    <property type="nucleotide sequence ID" value="NC_000898.1"/>
</dbReference>
<dbReference type="SMR" id="P0DTO8"/>
<dbReference type="GeneID" id="1497039"/>
<dbReference type="KEGG" id="vg:1497039"/>
<dbReference type="Proteomes" id="UP000142685">
    <property type="component" value="Segment"/>
</dbReference>
<dbReference type="GO" id="GO:0044201">
    <property type="term" value="C:host cell nuclear inner membrane"/>
    <property type="evidence" value="ECO:0007669"/>
    <property type="project" value="UniProtKB-SubCell"/>
</dbReference>
<dbReference type="GO" id="GO:0016020">
    <property type="term" value="C:membrane"/>
    <property type="evidence" value="ECO:0007669"/>
    <property type="project" value="UniProtKB-KW"/>
</dbReference>
<dbReference type="GO" id="GO:0008270">
    <property type="term" value="F:zinc ion binding"/>
    <property type="evidence" value="ECO:0007669"/>
    <property type="project" value="UniProtKB-KW"/>
</dbReference>
<dbReference type="GO" id="GO:0046765">
    <property type="term" value="P:viral budding from nuclear membrane"/>
    <property type="evidence" value="ECO:0007669"/>
    <property type="project" value="InterPro"/>
</dbReference>
<dbReference type="HAMAP" id="MF_04023">
    <property type="entry name" value="HSV_NEC1"/>
    <property type="match status" value="1"/>
</dbReference>
<dbReference type="InterPro" id="IPR021152">
    <property type="entry name" value="Herpes_UL31"/>
</dbReference>
<dbReference type="Pfam" id="PF02718">
    <property type="entry name" value="Herpes_UL31"/>
    <property type="match status" value="1"/>
</dbReference>
<gene>
    <name evidence="1" type="primary">NEC1</name>
    <name type="ordered locus">U37</name>
</gene>
<organism>
    <name type="scientific">Human herpesvirus 6B</name>
    <name type="common">HHV-6 variant B</name>
    <name type="synonym">Human B lymphotropic virus</name>
    <dbReference type="NCBI Taxonomy" id="32604"/>
    <lineage>
        <taxon>Viruses</taxon>
        <taxon>Duplodnaviria</taxon>
        <taxon>Heunggongvirae</taxon>
        <taxon>Peploviricota</taxon>
        <taxon>Herviviricetes</taxon>
        <taxon>Herpesvirales</taxon>
        <taxon>Orthoherpesviridae</taxon>
        <taxon>Betaherpesvirinae</taxon>
        <taxon>Roseolovirus</taxon>
        <taxon>Roseolovirus humanbeta6b</taxon>
    </lineage>
</organism>
<organismHost>
    <name type="scientific">Homo sapiens</name>
    <name type="common">Human</name>
    <dbReference type="NCBI Taxonomy" id="9606"/>
</organismHost>
<comment type="function">
    <text evidence="1">Plays an essential role in virion nuclear egress, the first step of virion release from infected cell. Within the host nucleus, NEC1 interacts with the newly formed capsid through the vertexes and directs it to the inner nuclear membrane by associating with NEC2. Induces the budding of the capsid at the inner nuclear membrane as well as its envelopment into the perinuclear space. There, the NEC1/NEC2 complex promotes the fusion of the enveloped capsid with the outer nuclear membrane and the subsequent release of the viral capsid into the cytoplasm where it will reach the secondary budding sites in the host Golgi or trans-Golgi network.</text>
</comment>
<comment type="subunit">
    <text evidence="1">Forms a heterohexameric complex with NEC2. Interacts with capsid vertex specific component 2/CVC2; this interaction directs the capsid to the host inner nuclear membrane to initiate budding.</text>
</comment>
<comment type="subcellular location">
    <subcellularLocation>
        <location evidence="1">Host nucleus inner membrane</location>
    </subcellularLocation>
    <text evidence="1">Remains attached to the nucleus inner membrane through interaction with NEC2.</text>
</comment>
<comment type="PTM">
    <text evidence="1">Phosphorylated at serine residues in the N-terminus. This phosphorylation regulates the localization within the inner nuclear membrane.</text>
</comment>
<comment type="similarity">
    <text evidence="1">Belongs to the herpesviridae NEC1 protein family.</text>
</comment>